<feature type="transit peptide" description="Chloroplast" evidence="1">
    <location>
        <begin position="1"/>
        <end position="66"/>
    </location>
</feature>
<feature type="chain" id="PRO_0000445235" description="RNA polymerase sigma factor sigA">
    <location>
        <begin position="67"/>
        <end position="520"/>
    </location>
</feature>
<feature type="DNA-binding region" description="H-T-H motif" evidence="1">
    <location>
        <begin position="479"/>
        <end position="498"/>
    </location>
</feature>
<feature type="region of interest" description="Disordered" evidence="2">
    <location>
        <begin position="37"/>
        <end position="57"/>
    </location>
</feature>
<feature type="region of interest" description="Disordered" evidence="2">
    <location>
        <begin position="87"/>
        <end position="117"/>
    </location>
</feature>
<feature type="region of interest" description="Disordered" evidence="2">
    <location>
        <begin position="171"/>
        <end position="190"/>
    </location>
</feature>
<feature type="short sequence motif" description="Polymerase core binding" evidence="1">
    <location>
        <begin position="305"/>
        <end position="318"/>
    </location>
</feature>
<feature type="compositionally biased region" description="Gly residues" evidence="2">
    <location>
        <begin position="37"/>
        <end position="49"/>
    </location>
</feature>
<feature type="compositionally biased region" description="Pro residues" evidence="2">
    <location>
        <begin position="96"/>
        <end position="108"/>
    </location>
</feature>
<feature type="compositionally biased region" description="Basic residues" evidence="2">
    <location>
        <begin position="175"/>
        <end position="187"/>
    </location>
</feature>
<feature type="sequence conflict" description="In Ref. 1; BAA24364." evidence="8" ref="1">
    <original>PP</original>
    <variation>A</variation>
    <location>
        <begin position="55"/>
        <end position="56"/>
    </location>
</feature>
<evidence type="ECO:0000255" key="1"/>
<evidence type="ECO:0000256" key="2">
    <source>
        <dbReference type="SAM" id="MobiDB-lite"/>
    </source>
</evidence>
<evidence type="ECO:0000269" key="3">
    <source>
    </source>
</evidence>
<evidence type="ECO:0000269" key="4">
    <source>
    </source>
</evidence>
<evidence type="ECO:0000269" key="5">
    <source>
    </source>
</evidence>
<evidence type="ECO:0000303" key="6">
    <source>
    </source>
</evidence>
<evidence type="ECO:0000303" key="7">
    <source>
    </source>
</evidence>
<evidence type="ECO:0000305" key="8"/>
<evidence type="ECO:0000305" key="9">
    <source>
    </source>
</evidence>
<evidence type="ECO:0000312" key="10">
    <source>
        <dbReference type="EMBL" id="BAC99905.1"/>
    </source>
</evidence>
<evidence type="ECO:0000312" key="11">
    <source>
        <dbReference type="EMBL" id="BAC99906.1"/>
    </source>
</evidence>
<evidence type="ECO:0000312" key="12">
    <source>
        <dbReference type="EMBL" id="BAF22979.2"/>
    </source>
</evidence>
<protein>
    <recommendedName>
        <fullName evidence="7">RNA polymerase sigma factor sigA</fullName>
        <shortName evidence="7">Os-sigA</shortName>
        <shortName evidence="8">Sigma factor A</shortName>
    </recommendedName>
    <alternativeName>
        <fullName evidence="8">Protein YELLOW-GREEN LEAF 13</fullName>
    </alternativeName>
    <alternativeName>
        <fullName evidence="6">RNA polymerase sigma factor sig1</fullName>
        <shortName evidence="6">OsSIG1</shortName>
        <shortName evidence="8">Sigma factor 1</shortName>
    </alternativeName>
</protein>
<proteinExistence type="evidence at transcript level"/>
<reference key="1">
    <citation type="journal article" date="1998" name="Nucleic Acids Res.">
        <title>Nuclear encoding of a plastid sigma factor in rice and its tissue- and light-dependent expression.</title>
        <authorList>
            <person name="Tozawa Y."/>
            <person name="Tanaka K."/>
            <person name="Takahashi H."/>
            <person name="Wakasa K."/>
        </authorList>
    </citation>
    <scope>NUCLEOTIDE SEQUENCE [MRNA]</scope>
    <scope>TISSUE SPECIFICITY</scope>
    <scope>INDUCTION BY LIGHT</scope>
    <source>
        <strain>cv. Nipponbare</strain>
    </source>
</reference>
<reference key="2">
    <citation type="journal article" date="2005" name="Nature">
        <title>The map-based sequence of the rice genome.</title>
        <authorList>
            <consortium name="International rice genome sequencing project (IRGSP)"/>
        </authorList>
    </citation>
    <scope>NUCLEOTIDE SEQUENCE [LARGE SCALE GENOMIC DNA]</scope>
    <source>
        <strain>cv. Nipponbare</strain>
    </source>
</reference>
<reference key="3">
    <citation type="journal article" date="2008" name="Nucleic Acids Res.">
        <title>The rice annotation project database (RAP-DB): 2008 update.</title>
        <authorList>
            <consortium name="The rice annotation project (RAP)"/>
        </authorList>
    </citation>
    <scope>GENOME REANNOTATION</scope>
    <source>
        <strain>cv. Nipponbare</strain>
    </source>
</reference>
<reference key="4">
    <citation type="journal article" date="2013" name="Rice">
        <title>Improvement of the Oryza sativa Nipponbare reference genome using next generation sequence and optical map data.</title>
        <authorList>
            <person name="Kawahara Y."/>
            <person name="de la Bastide M."/>
            <person name="Hamilton J.P."/>
            <person name="Kanamori H."/>
            <person name="McCombie W.R."/>
            <person name="Ouyang S."/>
            <person name="Schwartz D.C."/>
            <person name="Tanaka T."/>
            <person name="Wu J."/>
            <person name="Zhou S."/>
            <person name="Childs K.L."/>
            <person name="Davidson R.M."/>
            <person name="Lin H."/>
            <person name="Quesada-Ocampo L."/>
            <person name="Vaillancourt B."/>
            <person name="Sakai H."/>
            <person name="Lee S.S."/>
            <person name="Kim J."/>
            <person name="Numa H."/>
            <person name="Itoh T."/>
            <person name="Buell C.R."/>
            <person name="Matsumoto T."/>
        </authorList>
    </citation>
    <scope>GENOME REANNOTATION</scope>
    <source>
        <strain>cv. Nipponbare</strain>
    </source>
</reference>
<reference key="5">
    <citation type="journal article" date="2004" name="Biosci. Biotechnol. Biochem.">
        <title>Differential expression of three plastidial sigma factors, OsSIG1, OsSIG2A, and OsSIG2B, during leaf development in rice.</title>
        <authorList>
            <person name="Kasai K."/>
            <person name="Kawagishi-Kobayashi M."/>
            <person name="Teraishi M."/>
            <person name="Ito Y."/>
            <person name="Ochi K."/>
            <person name="Wakasa K."/>
            <person name="Tozawa Y."/>
        </authorList>
    </citation>
    <scope>TISSUE SPECIFICITY</scope>
</reference>
<reference key="6">
    <citation type="journal article" date="2007" name="Plant J.">
        <title>The plastid sigma factor SIG1 maintains photosystem I activity via regulated expression of the psaA operon in rice chloroplasts.</title>
        <authorList>
            <person name="Tozawa Y."/>
            <person name="Teraishi M."/>
            <person name="Sasaki T."/>
            <person name="Sonoike K."/>
            <person name="Nishiyama Y."/>
            <person name="Itaya M."/>
            <person name="Miyao A."/>
            <person name="Hirochika H."/>
        </authorList>
    </citation>
    <scope>FUNCTION</scope>
    <scope>TISSUE SPECIFICITY</scope>
    <scope>DISRUPTION PHENOTYPE</scope>
</reference>
<keyword id="KW-0150">Chloroplast</keyword>
<keyword id="KW-0238">DNA-binding</keyword>
<keyword id="KW-0934">Plastid</keyword>
<keyword id="KW-1185">Reference proteome</keyword>
<keyword id="KW-0731">Sigma factor</keyword>
<keyword id="KW-0804">Transcription</keyword>
<keyword id="KW-0805">Transcription regulation</keyword>
<keyword id="KW-0809">Transit peptide</keyword>
<sequence length="520" mass="57329">MTATPAVIGLSAGNRLLSASFGPTDLMPDKVSLGVGGGGGGGGGGGGGDAMSFAPPAPATPKLTAVAAHRLKLSPHGRAQVMRALRHHSSAAAALAPPPPPPPPPTPSPASRAAHAHDLESSLEAIVLLQRSMLEKQWELPFDDDNHAMAIGLAEDDDDTSKATVVVARSSVSARQRRMSGRRRGRTKNGAAHFAVSPELIQSRNRIYLRGTVSKELLTHKQVVHLSHKIKDGIWLQQQRSKLKEKLGNEPSYKQLAHSLKISPPELRSRMHESFLAREMLTMSNLRLVISIAQKYDNLGVELADLIQGGLIGLLRGIEKFDASRGFRISTYVYWWIRQGVSRALAENSKTFRLPTYLHERLIAIRGAKYELEDQGIAPTIENIAGSLNISEKKVLNATEAVNKVLSLDQQAFPSLNGLPGETLHSYIEDQNVANDPWHGFEEWYLKEEVNKLLNSTLNERERDIIRLYHGIGKQCHTWEDISRQFGLSRERVRQVGLIAMEKLKHAARRKNLEALLEDY</sequence>
<gene>
    <name evidence="7" type="primary">SIGA</name>
    <name evidence="6" type="synonym">SIG1</name>
    <name evidence="8" type="synonym">YGL13</name>
    <name evidence="12" type="ordered locus">Os08g0163400</name>
    <name evidence="8" type="ordered locus">LOC_Os08g06630</name>
    <name evidence="10" type="ORF">OJ9990_A01.116-1</name>
    <name evidence="11" type="ORF">OJ9990_A01.116-2</name>
</gene>
<name>SIGA_ORYSJ</name>
<comment type="function">
    <text evidence="4 9">Sigma factors are initiation factors that promote the attachment of plastid-encoded RNA polymerase (PEP) to specific initiation sites and are then released (Probable). Controls the transcription of the psaA and psaB genes in chloroplast, and thus maintains the abundance of the core protein complex PsaA-PsaB of photosystem I (PSI) in the thylakoid membrane (PubMed:17651366). Maintains PSI activity, sufficient rate of electron transfer from PSII to PSI, and photochemical efficiency (PubMed:17651366).</text>
</comment>
<comment type="subcellular location">
    <subcellularLocation>
        <location evidence="1">Plastid</location>
        <location evidence="1">Chloroplast</location>
    </subcellularLocation>
</comment>
<comment type="tissue specificity">
    <text evidence="3 4 5">Expressed in shoots (PubMed:9421493). Expressed in the tips of fully elongated leaves (PubMed:15118338). Expressed in leaf blades (PubMed:17651366).</text>
</comment>
<comment type="induction">
    <text evidence="5">Induced by light in dark-grown seedllings.</text>
</comment>
<comment type="disruption phenotype">
    <text evidence="4">Pale-green leaf phenotype due to reduced chlorophyll content.</text>
</comment>
<comment type="similarity">
    <text evidence="8">Belongs to the sigma-70 factor family.</text>
</comment>
<comment type="sequence caution" evidence="8">
    <conflict type="erroneous gene model prediction">
        <sequence resource="EMBL-CDS" id="BAC99905"/>
    </conflict>
</comment>
<comment type="sequence caution" evidence="8">
    <conflict type="erroneous gene model prediction">
        <sequence resource="EMBL-CDS" id="BAC99906"/>
    </conflict>
</comment>
<comment type="sequence caution" evidence="8">
    <conflict type="erroneous gene model prediction">
        <sequence resource="EMBL-CDS" id="BAT03964"/>
    </conflict>
</comment>
<comment type="sequence caution" evidence="8">
    <conflict type="erroneous gene model prediction">
        <sequence resource="EMBL-CDS" id="BAT03965"/>
    </conflict>
</comment>
<organism>
    <name type="scientific">Oryza sativa subsp. japonica</name>
    <name type="common">Rice</name>
    <dbReference type="NCBI Taxonomy" id="39947"/>
    <lineage>
        <taxon>Eukaryota</taxon>
        <taxon>Viridiplantae</taxon>
        <taxon>Streptophyta</taxon>
        <taxon>Embryophyta</taxon>
        <taxon>Tracheophyta</taxon>
        <taxon>Spermatophyta</taxon>
        <taxon>Magnoliopsida</taxon>
        <taxon>Liliopsida</taxon>
        <taxon>Poales</taxon>
        <taxon>Poaceae</taxon>
        <taxon>BOP clade</taxon>
        <taxon>Oryzoideae</taxon>
        <taxon>Oryzeae</taxon>
        <taxon>Oryzinae</taxon>
        <taxon>Oryza</taxon>
        <taxon>Oryza sativa</taxon>
    </lineage>
</organism>
<accession>Q0J7T6</accession>
<accession>A0A0P0XCX8</accession>
<accession>O48655</accession>
<accession>Q7EY07</accession>
<accession>Q7EY08</accession>
<dbReference type="EMBL" id="AB005290">
    <property type="protein sequence ID" value="BAA24364.1"/>
    <property type="molecule type" value="mRNA"/>
</dbReference>
<dbReference type="EMBL" id="AP005847">
    <property type="protein sequence ID" value="BAC99905.1"/>
    <property type="status" value="ALT_SEQ"/>
    <property type="molecule type" value="Genomic_DNA"/>
</dbReference>
<dbReference type="EMBL" id="AP005847">
    <property type="protein sequence ID" value="BAC99906.1"/>
    <property type="status" value="ALT_SEQ"/>
    <property type="molecule type" value="Genomic_DNA"/>
</dbReference>
<dbReference type="EMBL" id="AP008214">
    <property type="protein sequence ID" value="BAF22979.2"/>
    <property type="molecule type" value="Genomic_DNA"/>
</dbReference>
<dbReference type="EMBL" id="AP014964">
    <property type="protein sequence ID" value="BAT03964.1"/>
    <property type="status" value="ALT_SEQ"/>
    <property type="molecule type" value="Genomic_DNA"/>
</dbReference>
<dbReference type="EMBL" id="AP014964">
    <property type="protein sequence ID" value="BAT03965.1"/>
    <property type="status" value="ALT_SEQ"/>
    <property type="molecule type" value="Genomic_DNA"/>
</dbReference>
<dbReference type="SMR" id="Q0J7T6"/>
<dbReference type="FunCoup" id="Q0J7T6">
    <property type="interactions" value="427"/>
</dbReference>
<dbReference type="STRING" id="39947.Q0J7T6"/>
<dbReference type="PaxDb" id="39947-Q0J7T6"/>
<dbReference type="EnsemblPlants" id="Os08t0163400-03">
    <property type="protein sequence ID" value="Os08t0163400-03"/>
    <property type="gene ID" value="Os08g0163400"/>
</dbReference>
<dbReference type="GeneID" id="4344738"/>
<dbReference type="Gramene" id="Os08t0163400-03">
    <property type="protein sequence ID" value="Os08t0163400-03"/>
    <property type="gene ID" value="Os08g0163400"/>
</dbReference>
<dbReference type="KEGG" id="dosa:Os08g0163400"/>
<dbReference type="KEGG" id="osa:4344738"/>
<dbReference type="eggNOG" id="ENOG502QQ9I">
    <property type="taxonomic scope" value="Eukaryota"/>
</dbReference>
<dbReference type="HOGENOM" id="CLU_014793_3_4_1"/>
<dbReference type="InParanoid" id="Q0J7T6"/>
<dbReference type="OrthoDB" id="2012130at2759"/>
<dbReference type="Proteomes" id="UP000000763">
    <property type="component" value="Chromosome 8"/>
</dbReference>
<dbReference type="Proteomes" id="UP000059680">
    <property type="component" value="Chromosome 8"/>
</dbReference>
<dbReference type="GO" id="GO:0009507">
    <property type="term" value="C:chloroplast"/>
    <property type="evidence" value="ECO:0007669"/>
    <property type="project" value="UniProtKB-SubCell"/>
</dbReference>
<dbReference type="GO" id="GO:0003677">
    <property type="term" value="F:DNA binding"/>
    <property type="evidence" value="ECO:0007669"/>
    <property type="project" value="UniProtKB-KW"/>
</dbReference>
<dbReference type="GO" id="GO:0016987">
    <property type="term" value="F:sigma factor activity"/>
    <property type="evidence" value="ECO:0007669"/>
    <property type="project" value="UniProtKB-KW"/>
</dbReference>
<dbReference type="GO" id="GO:0071482">
    <property type="term" value="P:cellular response to light stimulus"/>
    <property type="evidence" value="ECO:0007669"/>
    <property type="project" value="EnsemblPlants"/>
</dbReference>
<dbReference type="GO" id="GO:0071461">
    <property type="term" value="P:cellular response to redox state"/>
    <property type="evidence" value="ECO:0007669"/>
    <property type="project" value="EnsemblPlants"/>
</dbReference>
<dbReference type="GO" id="GO:0006352">
    <property type="term" value="P:DNA-templated transcription initiation"/>
    <property type="evidence" value="ECO:0007669"/>
    <property type="project" value="EnsemblPlants"/>
</dbReference>
<dbReference type="GO" id="GO:0080005">
    <property type="term" value="P:photosystem stoichiometry adjustment"/>
    <property type="evidence" value="ECO:0000315"/>
    <property type="project" value="UniProtKB"/>
</dbReference>
<dbReference type="GO" id="GO:0006355">
    <property type="term" value="P:regulation of DNA-templated transcription"/>
    <property type="evidence" value="ECO:0000315"/>
    <property type="project" value="UniProtKB"/>
</dbReference>
<dbReference type="GO" id="GO:2001141">
    <property type="term" value="P:regulation of RNA biosynthetic process"/>
    <property type="evidence" value="ECO:0000315"/>
    <property type="project" value="UniProtKB"/>
</dbReference>
<dbReference type="CDD" id="cd06171">
    <property type="entry name" value="Sigma70_r4"/>
    <property type="match status" value="1"/>
</dbReference>
<dbReference type="FunFam" id="1.10.10.10:FF:000519">
    <property type="entry name" value="RNA polymerase sigma factor sigA"/>
    <property type="match status" value="1"/>
</dbReference>
<dbReference type="FunFam" id="1.10.601.10:FF:000004">
    <property type="entry name" value="RNA polymerase sigma factor sigA"/>
    <property type="match status" value="1"/>
</dbReference>
<dbReference type="Gene3D" id="1.10.601.10">
    <property type="entry name" value="RNA Polymerase Primary Sigma Factor"/>
    <property type="match status" value="1"/>
</dbReference>
<dbReference type="Gene3D" id="1.10.10.10">
    <property type="entry name" value="Winged helix-like DNA-binding domain superfamily/Winged helix DNA-binding domain"/>
    <property type="match status" value="2"/>
</dbReference>
<dbReference type="InterPro" id="IPR014284">
    <property type="entry name" value="RNA_pol_sigma-70_dom"/>
</dbReference>
<dbReference type="InterPro" id="IPR000943">
    <property type="entry name" value="RNA_pol_sigma70"/>
</dbReference>
<dbReference type="InterPro" id="IPR007627">
    <property type="entry name" value="RNA_pol_sigma70_r2"/>
</dbReference>
<dbReference type="InterPro" id="IPR007624">
    <property type="entry name" value="RNA_pol_sigma70_r3"/>
</dbReference>
<dbReference type="InterPro" id="IPR007630">
    <property type="entry name" value="RNA_pol_sigma70_r4"/>
</dbReference>
<dbReference type="InterPro" id="IPR013325">
    <property type="entry name" value="RNA_pol_sigma_r2"/>
</dbReference>
<dbReference type="InterPro" id="IPR013324">
    <property type="entry name" value="RNA_pol_sigma_r3/r4-like"/>
</dbReference>
<dbReference type="InterPro" id="IPR050239">
    <property type="entry name" value="Sigma-70_RNA_pol_init_factors"/>
</dbReference>
<dbReference type="InterPro" id="IPR036388">
    <property type="entry name" value="WH-like_DNA-bd_sf"/>
</dbReference>
<dbReference type="NCBIfam" id="TIGR02937">
    <property type="entry name" value="sigma70-ECF"/>
    <property type="match status" value="1"/>
</dbReference>
<dbReference type="PANTHER" id="PTHR30603">
    <property type="entry name" value="RNA POLYMERASE SIGMA FACTOR RPO"/>
    <property type="match status" value="1"/>
</dbReference>
<dbReference type="PANTHER" id="PTHR30603:SF14">
    <property type="entry name" value="RNA POLYMERASE SIGMA FACTOR SIGA"/>
    <property type="match status" value="1"/>
</dbReference>
<dbReference type="Pfam" id="PF04542">
    <property type="entry name" value="Sigma70_r2"/>
    <property type="match status" value="1"/>
</dbReference>
<dbReference type="Pfam" id="PF04539">
    <property type="entry name" value="Sigma70_r3"/>
    <property type="match status" value="1"/>
</dbReference>
<dbReference type="Pfam" id="PF04545">
    <property type="entry name" value="Sigma70_r4"/>
    <property type="match status" value="1"/>
</dbReference>
<dbReference type="PRINTS" id="PR00046">
    <property type="entry name" value="SIGMA70FCT"/>
</dbReference>
<dbReference type="SUPFAM" id="SSF88946">
    <property type="entry name" value="Sigma2 domain of RNA polymerase sigma factors"/>
    <property type="match status" value="1"/>
</dbReference>
<dbReference type="SUPFAM" id="SSF88659">
    <property type="entry name" value="Sigma3 and sigma4 domains of RNA polymerase sigma factors"/>
    <property type="match status" value="2"/>
</dbReference>
<dbReference type="PROSITE" id="PS00715">
    <property type="entry name" value="SIGMA70_1"/>
    <property type="match status" value="1"/>
</dbReference>